<dbReference type="EMBL" id="CP000253">
    <property type="protein sequence ID" value="ABD30860.1"/>
    <property type="molecule type" value="Genomic_DNA"/>
</dbReference>
<dbReference type="RefSeq" id="WP_000533485.1">
    <property type="nucleotide sequence ID" value="NZ_LS483365.1"/>
</dbReference>
<dbReference type="RefSeq" id="YP_500296.1">
    <property type="nucleotide sequence ID" value="NC_007795.1"/>
</dbReference>
<dbReference type="SMR" id="Q2FXP4"/>
<dbReference type="STRING" id="93061.SAOUHSC_01792"/>
<dbReference type="PaxDb" id="1280-SAXN108_1711"/>
<dbReference type="GeneID" id="3920433"/>
<dbReference type="KEGG" id="sao:SAOUHSC_01792"/>
<dbReference type="PATRIC" id="fig|93061.5.peg.1632"/>
<dbReference type="eggNOG" id="COG3611">
    <property type="taxonomic scope" value="Bacteria"/>
</dbReference>
<dbReference type="HOGENOM" id="CLU_040783_0_0_9"/>
<dbReference type="OrthoDB" id="2082007at2"/>
<dbReference type="Proteomes" id="UP000008816">
    <property type="component" value="Chromosome"/>
</dbReference>
<dbReference type="InterPro" id="IPR006343">
    <property type="entry name" value="DnaD_dom"/>
</dbReference>
<dbReference type="Pfam" id="PF07261">
    <property type="entry name" value="DnaB_2"/>
    <property type="match status" value="1"/>
</dbReference>
<protein>
    <recommendedName>
        <fullName evidence="5">Replicative helicase loading/DNA remodeling protein DnaB</fullName>
    </recommendedName>
</protein>
<proteinExistence type="evidence at protein level"/>
<sequence length="466" mass="54533">MGRQAFEFGLRPKDQFKVMQHFDLNTNHLEVLNRLYTPLIGTQAVGLYHFMTQFVKESHNETLILSHYIFMNELKINLLEFRQQMDLLEAIGLLKAFVKHDEQETQFVYQLIQPPSAHLFFNDPMLSIFLYSEVEHRRFHELKKYFEYQQIDLSEFKQVTRQFTDVFKVPSTKIDIDTSDIPINEPYQGIDLSNESFDFEMLRQMLGKHFISQDIVTKDAKRLITQLATLYGLTADGMKHVILNSITSGQQLSFEEMRKQARSYYLMEHENQMPKLQVKSPATSSSAGKSSEVNPKPQSDEWFELLEQTSPIDMLASWSESEPTISQKTMVEELIEREKMSFGVINILLQFVMLKEDMKLPKAYILEIASNWKKKGIKTAKEAYNYAKKVNQPKNEGSSGNYQKRGSYYGQRNRISKEKTPKWLENRDKPSEEDSAKDNSVDDQQLEQDRQAFLDKLSKKWEEDSQ</sequence>
<feature type="chain" id="PRO_0000462474" description="Replicative helicase loading/DNA remodeling protein DnaB">
    <location>
        <begin position="1"/>
        <end position="466"/>
    </location>
</feature>
<feature type="region of interest" description="DDBH1" evidence="1">
    <location>
        <begin position="3"/>
        <end position="113"/>
    </location>
</feature>
<feature type="region of interest" description="DDBH2-1" evidence="1">
    <location>
        <begin position="200"/>
        <end position="292"/>
    </location>
</feature>
<feature type="region of interest" description="DDBH2-2" evidence="1">
    <location>
        <begin position="293"/>
        <end position="401"/>
    </location>
</feature>
<reference evidence="6" key="1">
    <citation type="book" date="2006" name="Gram positive pathogens, 2nd edition">
        <title>The Staphylococcus aureus NCTC 8325 genome.</title>
        <editorList>
            <person name="Fischetti V."/>
            <person name="Novick R."/>
            <person name="Ferretti J."/>
            <person name="Portnoy D."/>
            <person name="Rood J."/>
        </editorList>
        <authorList>
            <person name="Gillaspy A.F."/>
            <person name="Worrell V."/>
            <person name="Orvis J."/>
            <person name="Roe B.A."/>
            <person name="Dyer D.W."/>
            <person name="Iandolo J.J."/>
        </authorList>
    </citation>
    <scope>NUCLEOTIDE SEQUENCE [LARGE SCALE GENOMIC DNA]</scope>
    <source>
        <strain>NCTC 8325 / PS 47</strain>
    </source>
</reference>
<reference key="2">
    <citation type="journal article" date="2020" name="J. Bacteriol.">
        <title>Regulation of DNA Binding and High-Order Oligomerization of the DnaB Helicase Loader.</title>
        <authorList>
            <person name="Matthews L.A."/>
            <person name="Simmons L.A."/>
        </authorList>
    </citation>
    <scope>FUNCTION</scope>
    <scope>SUBUNIT</scope>
    <scope>DNA-BINDING</scope>
    <source>
        <strain>NCTC 8325 / SH1000</strain>
    </source>
</reference>
<accession>Q2FXP4</accession>
<evidence type="ECO:0000250" key="1">
    <source>
        <dbReference type="UniProtKB" id="P07908"/>
    </source>
</evidence>
<evidence type="ECO:0000269" key="2">
    <source>
    </source>
</evidence>
<evidence type="ECO:0000303" key="3">
    <source>
    </source>
</evidence>
<evidence type="ECO:0000305" key="4"/>
<evidence type="ECO:0000305" key="5">
    <source>
    </source>
</evidence>
<evidence type="ECO:0000312" key="6">
    <source>
        <dbReference type="EMBL" id="ABD30860.1"/>
    </source>
</evidence>
<name>DNAB_STAA8</name>
<gene>
    <name evidence="3" type="primary">dnaB</name>
    <name evidence="6" type="ordered locus">SAOUHSC_01792</name>
</gene>
<organism>
    <name type="scientific">Staphylococcus aureus (strain NCTC 8325 / PS 47)</name>
    <dbReference type="NCBI Taxonomy" id="93061"/>
    <lineage>
        <taxon>Bacteria</taxon>
        <taxon>Bacillati</taxon>
        <taxon>Bacillota</taxon>
        <taxon>Bacilli</taxon>
        <taxon>Bacillales</taxon>
        <taxon>Staphylococcaceae</taxon>
        <taxon>Staphylococcus</taxon>
    </lineage>
</organism>
<keyword id="KW-0235">DNA replication</keyword>
<keyword id="KW-0238">DNA-binding</keyword>
<keyword id="KW-0639">Primosome</keyword>
<keyword id="KW-1185">Reference proteome</keyword>
<comment type="function">
    <text evidence="1 2">Helps DnaI load the DnaC replicative helicase onto single-stranded (ss)DNA (By similarity). During DNA replication from the origin of replication (oriC) in the DNA replisome, DnaB and DnaD are required after DnaA and before subsequent helicase DnaC loading (By similarity). Component of the replication restart primosome, which reloads the replicative helicase on sites other than oriC (By similarity). Essential for replication initiation of the chromosome and plasmids. Remodels DNA, laterally compacts supercoiled plasmid and linear DNA (By similarity). Binds supercoiled, nicked and linear double-stranded (ds)DNA and phage phiX174 single-stranded (ss)DNA; phiX174 ssDNA is a better substrate than for B.subtilis (PubMed:32817095). No binding to phage M13 ssDNA although it induces oligomers (PubMed:32817095).</text>
</comment>
<comment type="subunit">
    <text evidence="1 2">Homotetramer, higher-order oligomers are induced by ssDNA (PubMed:32817095). The DNA replisome assembles sequentially on oriC in this order; DnaA, DnaD, DnaB, DnaI-DnaC helicase (By similarity). Part of the replication restart primosome, PriA binds first, then DnaD and subsequently DnaB bind (By similarity).</text>
</comment>
<comment type="similarity">
    <text evidence="4">Belongs to the DnaB/DnaD family.</text>
</comment>